<dbReference type="EC" id="7.1.1.-" evidence="1"/>
<dbReference type="EMBL" id="BX548175">
    <property type="protein sequence ID" value="CAE22194.1"/>
    <property type="status" value="ALT_INIT"/>
    <property type="molecule type" value="Genomic_DNA"/>
</dbReference>
<dbReference type="RefSeq" id="WP_197524618.1">
    <property type="nucleotide sequence ID" value="NC_005071.1"/>
</dbReference>
<dbReference type="SMR" id="Q7V4D7"/>
<dbReference type="KEGG" id="pmt:PMT_2020"/>
<dbReference type="eggNOG" id="COG1005">
    <property type="taxonomic scope" value="Bacteria"/>
</dbReference>
<dbReference type="HOGENOM" id="CLU_015134_0_1_3"/>
<dbReference type="Proteomes" id="UP000001423">
    <property type="component" value="Chromosome"/>
</dbReference>
<dbReference type="GO" id="GO:0031676">
    <property type="term" value="C:plasma membrane-derived thylakoid membrane"/>
    <property type="evidence" value="ECO:0007669"/>
    <property type="project" value="UniProtKB-SubCell"/>
</dbReference>
<dbReference type="GO" id="GO:0003954">
    <property type="term" value="F:NADH dehydrogenase activity"/>
    <property type="evidence" value="ECO:0007669"/>
    <property type="project" value="TreeGrafter"/>
</dbReference>
<dbReference type="GO" id="GO:0016655">
    <property type="term" value="F:oxidoreductase activity, acting on NAD(P)H, quinone or similar compound as acceptor"/>
    <property type="evidence" value="ECO:0007669"/>
    <property type="project" value="UniProtKB-UniRule"/>
</dbReference>
<dbReference type="GO" id="GO:0048038">
    <property type="term" value="F:quinone binding"/>
    <property type="evidence" value="ECO:0007669"/>
    <property type="project" value="UniProtKB-KW"/>
</dbReference>
<dbReference type="GO" id="GO:0009060">
    <property type="term" value="P:aerobic respiration"/>
    <property type="evidence" value="ECO:0007669"/>
    <property type="project" value="TreeGrafter"/>
</dbReference>
<dbReference type="GO" id="GO:0019684">
    <property type="term" value="P:photosynthesis, light reaction"/>
    <property type="evidence" value="ECO:0007669"/>
    <property type="project" value="UniProtKB-UniRule"/>
</dbReference>
<dbReference type="HAMAP" id="MF_01350">
    <property type="entry name" value="NDH1_NuoH"/>
    <property type="match status" value="1"/>
</dbReference>
<dbReference type="InterPro" id="IPR001694">
    <property type="entry name" value="NADH_UbQ_OxRdtase_su1/FPO"/>
</dbReference>
<dbReference type="InterPro" id="IPR018086">
    <property type="entry name" value="NADH_UbQ_OxRdtase_su1_CS"/>
</dbReference>
<dbReference type="NCBIfam" id="NF004741">
    <property type="entry name" value="PRK06076.1-2"/>
    <property type="match status" value="1"/>
</dbReference>
<dbReference type="NCBIfam" id="NF004744">
    <property type="entry name" value="PRK06076.1-5"/>
    <property type="match status" value="1"/>
</dbReference>
<dbReference type="PANTHER" id="PTHR11432">
    <property type="entry name" value="NADH DEHYDROGENASE SUBUNIT 1"/>
    <property type="match status" value="1"/>
</dbReference>
<dbReference type="PANTHER" id="PTHR11432:SF3">
    <property type="entry name" value="NADH-UBIQUINONE OXIDOREDUCTASE CHAIN 1"/>
    <property type="match status" value="1"/>
</dbReference>
<dbReference type="Pfam" id="PF00146">
    <property type="entry name" value="NADHdh"/>
    <property type="match status" value="1"/>
</dbReference>
<dbReference type="PROSITE" id="PS00667">
    <property type="entry name" value="COMPLEX1_ND1_1"/>
    <property type="match status" value="1"/>
</dbReference>
<dbReference type="PROSITE" id="PS00668">
    <property type="entry name" value="COMPLEX1_ND1_2"/>
    <property type="match status" value="1"/>
</dbReference>
<keyword id="KW-0472">Membrane</keyword>
<keyword id="KW-0520">NAD</keyword>
<keyword id="KW-0521">NADP</keyword>
<keyword id="KW-0618">Plastoquinone</keyword>
<keyword id="KW-0874">Quinone</keyword>
<keyword id="KW-1185">Reference proteome</keyword>
<keyword id="KW-0793">Thylakoid</keyword>
<keyword id="KW-1278">Translocase</keyword>
<keyword id="KW-0812">Transmembrane</keyword>
<keyword id="KW-1133">Transmembrane helix</keyword>
<feature type="chain" id="PRO_0000240039" description="NAD(P)H-quinone oxidoreductase subunit 1">
    <location>
        <begin position="1"/>
        <end position="372"/>
    </location>
</feature>
<feature type="transmembrane region" description="Helical" evidence="1">
    <location>
        <begin position="27"/>
        <end position="47"/>
    </location>
</feature>
<feature type="transmembrane region" description="Helical" evidence="1">
    <location>
        <begin position="97"/>
        <end position="117"/>
    </location>
</feature>
<feature type="transmembrane region" description="Helical" evidence="1">
    <location>
        <begin position="128"/>
        <end position="148"/>
    </location>
</feature>
<feature type="transmembrane region" description="Helical" evidence="1">
    <location>
        <begin position="166"/>
        <end position="186"/>
    </location>
</feature>
<feature type="transmembrane region" description="Helical" evidence="1">
    <location>
        <begin position="204"/>
        <end position="224"/>
    </location>
</feature>
<feature type="transmembrane region" description="Helical" evidence="1">
    <location>
        <begin position="266"/>
        <end position="286"/>
    </location>
</feature>
<feature type="transmembrane region" description="Helical" evidence="1">
    <location>
        <begin position="308"/>
        <end position="328"/>
    </location>
</feature>
<feature type="transmembrane region" description="Helical" evidence="1">
    <location>
        <begin position="347"/>
        <end position="367"/>
    </location>
</feature>
<gene>
    <name evidence="1" type="primary">ndhA</name>
    <name type="ordered locus">PMT_2020</name>
</gene>
<organism>
    <name type="scientific">Prochlorococcus marinus (strain MIT 9313)</name>
    <dbReference type="NCBI Taxonomy" id="74547"/>
    <lineage>
        <taxon>Bacteria</taxon>
        <taxon>Bacillati</taxon>
        <taxon>Cyanobacteriota</taxon>
        <taxon>Cyanophyceae</taxon>
        <taxon>Synechococcales</taxon>
        <taxon>Prochlorococcaceae</taxon>
        <taxon>Prochlorococcus</taxon>
    </lineage>
</organism>
<evidence type="ECO:0000255" key="1">
    <source>
        <dbReference type="HAMAP-Rule" id="MF_01350"/>
    </source>
</evidence>
<evidence type="ECO:0000305" key="2"/>
<name>NU1C_PROMM</name>
<reference key="1">
    <citation type="journal article" date="2003" name="Nature">
        <title>Genome divergence in two Prochlorococcus ecotypes reflects oceanic niche differentiation.</title>
        <authorList>
            <person name="Rocap G."/>
            <person name="Larimer F.W."/>
            <person name="Lamerdin J.E."/>
            <person name="Malfatti S."/>
            <person name="Chain P."/>
            <person name="Ahlgren N.A."/>
            <person name="Arellano A."/>
            <person name="Coleman M."/>
            <person name="Hauser L."/>
            <person name="Hess W.R."/>
            <person name="Johnson Z.I."/>
            <person name="Land M.L."/>
            <person name="Lindell D."/>
            <person name="Post A.F."/>
            <person name="Regala W."/>
            <person name="Shah M."/>
            <person name="Shaw S.L."/>
            <person name="Steglich C."/>
            <person name="Sullivan M.B."/>
            <person name="Ting C.S."/>
            <person name="Tolonen A."/>
            <person name="Webb E.A."/>
            <person name="Zinser E.R."/>
            <person name="Chisholm S.W."/>
        </authorList>
    </citation>
    <scope>NUCLEOTIDE SEQUENCE [LARGE SCALE GENOMIC DNA]</scope>
    <source>
        <strain>MIT 9313</strain>
    </source>
</reference>
<proteinExistence type="inferred from homology"/>
<comment type="function">
    <text evidence="1">NDH-1 shuttles electrons from an unknown electron donor, via FMN and iron-sulfur (Fe-S) centers, to quinones in the respiratory and/or the photosynthetic chain. The immediate electron acceptor for the enzyme in this species is believed to be plastoquinone. Couples the redox reaction to proton translocation, and thus conserves the redox energy in a proton gradient.</text>
</comment>
<comment type="catalytic activity">
    <reaction evidence="1">
        <text>a plastoquinone + NADH + (n+1) H(+)(in) = a plastoquinol + NAD(+) + n H(+)(out)</text>
        <dbReference type="Rhea" id="RHEA:42608"/>
        <dbReference type="Rhea" id="RHEA-COMP:9561"/>
        <dbReference type="Rhea" id="RHEA-COMP:9562"/>
        <dbReference type="ChEBI" id="CHEBI:15378"/>
        <dbReference type="ChEBI" id="CHEBI:17757"/>
        <dbReference type="ChEBI" id="CHEBI:57540"/>
        <dbReference type="ChEBI" id="CHEBI:57945"/>
        <dbReference type="ChEBI" id="CHEBI:62192"/>
    </reaction>
</comment>
<comment type="catalytic activity">
    <reaction evidence="1">
        <text>a plastoquinone + NADPH + (n+1) H(+)(in) = a plastoquinol + NADP(+) + n H(+)(out)</text>
        <dbReference type="Rhea" id="RHEA:42612"/>
        <dbReference type="Rhea" id="RHEA-COMP:9561"/>
        <dbReference type="Rhea" id="RHEA-COMP:9562"/>
        <dbReference type="ChEBI" id="CHEBI:15378"/>
        <dbReference type="ChEBI" id="CHEBI:17757"/>
        <dbReference type="ChEBI" id="CHEBI:57783"/>
        <dbReference type="ChEBI" id="CHEBI:58349"/>
        <dbReference type="ChEBI" id="CHEBI:62192"/>
    </reaction>
</comment>
<comment type="subunit">
    <text evidence="1">NDH-1 is composed of at least 11 different subunits.</text>
</comment>
<comment type="subcellular location">
    <subcellularLocation>
        <location evidence="1">Cellular thylakoid membrane</location>
        <topology evidence="1">Multi-pass membrane protein</topology>
    </subcellularLocation>
</comment>
<comment type="similarity">
    <text evidence="1">Belongs to the complex I subunit 1 family.</text>
</comment>
<comment type="sequence caution" evidence="2">
    <conflict type="erroneous initiation">
        <sequence resource="EMBL-CDS" id="CAE22194"/>
    </conflict>
</comment>
<sequence length="372" mass="40122">MSSGLDLELSFSQSLQGLGLSPQVAHLIWLPLPMLLVLTAAMVGVLVTVWLERKISAAVQQRIGPEYAGALGVLQPMADGLKLLVKEDVIPVRADGLLFTLGPVLVLVPVILSWLIVPFGQNLLISNVGIGIFLWISLSSIQPIGLLMSGYASNNKYSLLGGLRAAAQSISYEIPLALAVLAVVMMSNSLSTVDIVAQQNGAGLLSWNVWRQPVGFLIFWICALAECERLPFDLPEAEEELVAGYQTEYAGMKFALFYLGSYINLVLSSLLVAVLYLGGWGFPIPVEWLAGWLGQSVDAPLVQVITGSVGIVMTVLKAYLLVFLAILLRWTTPRVRIDQLLDLGWKFLLPIALGNLLITAALKLAFPVAFGG</sequence>
<protein>
    <recommendedName>
        <fullName evidence="1">NAD(P)H-quinone oxidoreductase subunit 1</fullName>
        <ecNumber evidence="1">7.1.1.-</ecNumber>
    </recommendedName>
    <alternativeName>
        <fullName evidence="1">NAD(P)H dehydrogenase I subunit 1</fullName>
    </alternativeName>
    <alternativeName>
        <fullName evidence="1">NDH-1 subunit 1</fullName>
    </alternativeName>
    <alternativeName>
        <fullName evidence="1">NDH-A</fullName>
    </alternativeName>
</protein>
<accession>Q7V4D7</accession>